<organism>
    <name type="scientific">Rhizobium rhizogenes (strain K84 / ATCC BAA-868)</name>
    <name type="common">Agrobacterium radiobacter</name>
    <dbReference type="NCBI Taxonomy" id="311403"/>
    <lineage>
        <taxon>Bacteria</taxon>
        <taxon>Pseudomonadati</taxon>
        <taxon>Pseudomonadota</taxon>
        <taxon>Alphaproteobacteria</taxon>
        <taxon>Hyphomicrobiales</taxon>
        <taxon>Rhizobiaceae</taxon>
        <taxon>Rhizobium/Agrobacterium group</taxon>
        <taxon>Rhizobium</taxon>
    </lineage>
</organism>
<evidence type="ECO:0000255" key="1">
    <source>
        <dbReference type="HAMAP-Rule" id="MF_00409"/>
    </source>
</evidence>
<feature type="chain" id="PRO_1000134732" description="Tetraacyldisaccharide 4'-kinase">
    <location>
        <begin position="1"/>
        <end position="355"/>
    </location>
</feature>
<feature type="binding site" evidence="1">
    <location>
        <begin position="54"/>
        <end position="61"/>
    </location>
    <ligand>
        <name>ATP</name>
        <dbReference type="ChEBI" id="CHEBI:30616"/>
    </ligand>
</feature>
<protein>
    <recommendedName>
        <fullName evidence="1">Tetraacyldisaccharide 4'-kinase</fullName>
        <ecNumber evidence="1">2.7.1.130</ecNumber>
    </recommendedName>
    <alternativeName>
        <fullName evidence="1">Lipid A 4'-kinase</fullName>
    </alternativeName>
</protein>
<gene>
    <name evidence="1" type="primary">lpxK</name>
    <name type="ordered locus">Arad_1092</name>
</gene>
<comment type="function">
    <text evidence="1">Transfers the gamma-phosphate of ATP to the 4'-position of a tetraacyldisaccharide 1-phosphate intermediate (termed DS-1-P) to form tetraacyldisaccharide 1,4'-bis-phosphate (lipid IVA).</text>
</comment>
<comment type="catalytic activity">
    <reaction evidence="1">
        <text>a lipid A disaccharide + ATP = a lipid IVA + ADP + H(+)</text>
        <dbReference type="Rhea" id="RHEA:67840"/>
        <dbReference type="ChEBI" id="CHEBI:15378"/>
        <dbReference type="ChEBI" id="CHEBI:30616"/>
        <dbReference type="ChEBI" id="CHEBI:176343"/>
        <dbReference type="ChEBI" id="CHEBI:176425"/>
        <dbReference type="ChEBI" id="CHEBI:456216"/>
        <dbReference type="EC" id="2.7.1.130"/>
    </reaction>
</comment>
<comment type="pathway">
    <text evidence="1">Glycolipid biosynthesis; lipid IV(A) biosynthesis; lipid IV(A) from (3R)-3-hydroxytetradecanoyl-[acyl-carrier-protein] and UDP-N-acetyl-alpha-D-glucosamine: step 6/6.</text>
</comment>
<comment type="similarity">
    <text evidence="1">Belongs to the LpxK family.</text>
</comment>
<keyword id="KW-0067">ATP-binding</keyword>
<keyword id="KW-0418">Kinase</keyword>
<keyword id="KW-0441">Lipid A biosynthesis</keyword>
<keyword id="KW-0444">Lipid biosynthesis</keyword>
<keyword id="KW-0443">Lipid metabolism</keyword>
<keyword id="KW-0547">Nucleotide-binding</keyword>
<keyword id="KW-0808">Transferase</keyword>
<proteinExistence type="inferred from homology"/>
<reference key="1">
    <citation type="journal article" date="2009" name="J. Bacteriol.">
        <title>Genome sequences of three Agrobacterium biovars help elucidate the evolution of multichromosome genomes in bacteria.</title>
        <authorList>
            <person name="Slater S.C."/>
            <person name="Goldman B.S."/>
            <person name="Goodner B."/>
            <person name="Setubal J.C."/>
            <person name="Farrand S.K."/>
            <person name="Nester E.W."/>
            <person name="Burr T.J."/>
            <person name="Banta L."/>
            <person name="Dickerman A.W."/>
            <person name="Paulsen I."/>
            <person name="Otten L."/>
            <person name="Suen G."/>
            <person name="Welch R."/>
            <person name="Almeida N.F."/>
            <person name="Arnold F."/>
            <person name="Burton O.T."/>
            <person name="Du Z."/>
            <person name="Ewing A."/>
            <person name="Godsy E."/>
            <person name="Heisel S."/>
            <person name="Houmiel K.L."/>
            <person name="Jhaveri J."/>
            <person name="Lu J."/>
            <person name="Miller N.M."/>
            <person name="Norton S."/>
            <person name="Chen Q."/>
            <person name="Phoolcharoen W."/>
            <person name="Ohlin V."/>
            <person name="Ondrusek D."/>
            <person name="Pride N."/>
            <person name="Stricklin S.L."/>
            <person name="Sun J."/>
            <person name="Wheeler C."/>
            <person name="Wilson L."/>
            <person name="Zhu H."/>
            <person name="Wood D.W."/>
        </authorList>
    </citation>
    <scope>NUCLEOTIDE SEQUENCE [LARGE SCALE GENOMIC DNA]</scope>
    <source>
        <strain>K84 / ATCC BAA-868</strain>
    </source>
</reference>
<sequence length="355" mass="38347">MVSEAPPFWWRKPDWRAWGLSPFSFLYGRVAGHRMVHGRRASVPVPVICVGNFTVGGAGKTPTALALARAAKTKGLKPGFLSRGYGGSLDVTTVVDPHDHHATAVGDEPLLLAREALTVIARRRADGAERLVREGADLIIMDDGFQSAQLAIDYALVVIDATRGIGNGHLVPGGPVRAPLRTQLGYTSGLLKVGDGNAADRIVRLAARAGKPFFSASIKTLGQEDLQGRKVLAFAGIADPTKFFRTVETLGAGIAVRRSFGDHEHLEEDEIADILDVADRDGLEIVTTSKDYVRLIGHHGRADELLARCRVIEIAMVFDDPHAPELIIDRAIAAARERRLREGWTGKTLLPSGEK</sequence>
<name>LPXK_RHIR8</name>
<dbReference type="EC" id="2.7.1.130" evidence="1"/>
<dbReference type="EMBL" id="CP000628">
    <property type="protein sequence ID" value="ACM25627.1"/>
    <property type="molecule type" value="Genomic_DNA"/>
</dbReference>
<dbReference type="RefSeq" id="WP_007699761.1">
    <property type="nucleotide sequence ID" value="NC_011985.1"/>
</dbReference>
<dbReference type="SMR" id="B9JA09"/>
<dbReference type="STRING" id="311403.Arad_1092"/>
<dbReference type="KEGG" id="ara:Arad_1092"/>
<dbReference type="eggNOG" id="COG1663">
    <property type="taxonomic scope" value="Bacteria"/>
</dbReference>
<dbReference type="HOGENOM" id="CLU_038816_0_0_5"/>
<dbReference type="UniPathway" id="UPA00359">
    <property type="reaction ID" value="UER00482"/>
</dbReference>
<dbReference type="Proteomes" id="UP000001600">
    <property type="component" value="Chromosome 1"/>
</dbReference>
<dbReference type="GO" id="GO:0005886">
    <property type="term" value="C:plasma membrane"/>
    <property type="evidence" value="ECO:0007669"/>
    <property type="project" value="TreeGrafter"/>
</dbReference>
<dbReference type="GO" id="GO:0005524">
    <property type="term" value="F:ATP binding"/>
    <property type="evidence" value="ECO:0007669"/>
    <property type="project" value="UniProtKB-UniRule"/>
</dbReference>
<dbReference type="GO" id="GO:0009029">
    <property type="term" value="F:tetraacyldisaccharide 4'-kinase activity"/>
    <property type="evidence" value="ECO:0007669"/>
    <property type="project" value="UniProtKB-UniRule"/>
</dbReference>
<dbReference type="GO" id="GO:0009245">
    <property type="term" value="P:lipid A biosynthetic process"/>
    <property type="evidence" value="ECO:0007669"/>
    <property type="project" value="UniProtKB-UniRule"/>
</dbReference>
<dbReference type="GO" id="GO:0009244">
    <property type="term" value="P:lipopolysaccharide core region biosynthetic process"/>
    <property type="evidence" value="ECO:0007669"/>
    <property type="project" value="TreeGrafter"/>
</dbReference>
<dbReference type="HAMAP" id="MF_00409">
    <property type="entry name" value="LpxK"/>
    <property type="match status" value="1"/>
</dbReference>
<dbReference type="InterPro" id="IPR003758">
    <property type="entry name" value="LpxK"/>
</dbReference>
<dbReference type="InterPro" id="IPR027417">
    <property type="entry name" value="P-loop_NTPase"/>
</dbReference>
<dbReference type="NCBIfam" id="TIGR00682">
    <property type="entry name" value="lpxK"/>
    <property type="match status" value="1"/>
</dbReference>
<dbReference type="PANTHER" id="PTHR42724">
    <property type="entry name" value="TETRAACYLDISACCHARIDE 4'-KINASE"/>
    <property type="match status" value="1"/>
</dbReference>
<dbReference type="PANTHER" id="PTHR42724:SF1">
    <property type="entry name" value="TETRAACYLDISACCHARIDE 4'-KINASE, MITOCHONDRIAL-RELATED"/>
    <property type="match status" value="1"/>
</dbReference>
<dbReference type="Pfam" id="PF02606">
    <property type="entry name" value="LpxK"/>
    <property type="match status" value="1"/>
</dbReference>
<dbReference type="SUPFAM" id="SSF52540">
    <property type="entry name" value="P-loop containing nucleoside triphosphate hydrolases"/>
    <property type="match status" value="1"/>
</dbReference>
<accession>B9JA09</accession>